<evidence type="ECO:0000255" key="1">
    <source>
        <dbReference type="HAMAP-Rule" id="MF_00657"/>
    </source>
</evidence>
<protein>
    <recommendedName>
        <fullName evidence="1">PKHD-type hydroxylase azo0608</fullName>
        <ecNumber evidence="1">1.14.11.-</ecNumber>
    </recommendedName>
</protein>
<accession>A1K320</accession>
<gene>
    <name type="ordered locus">azo0608</name>
</gene>
<name>Y608_AZOSB</name>
<proteinExistence type="inferred from homology"/>
<sequence>MLITIDDVLSPEELAQARKLIAASRWVSGHVTAGPQALHSKNNEQLPEDAEHLPALRRLILGALNRNPLFFAAALPLRVLTPFFNRYAGDSNHYGYHTDNAMRLAPEGGYVRADVSATVFLSDPEEYEGGVLTIADTFGTHGVKLKAGSAVVYPSSSIHQVTPVTAGARVACFMFMQSMVRDAHQRRLLFDMDMALLQLRQSVGEDNDAVVRLTGTYHNLLRLWADA</sequence>
<reference key="1">
    <citation type="journal article" date="2006" name="Nat. Biotechnol.">
        <title>Complete genome of the mutualistic, N2-fixing grass endophyte Azoarcus sp. strain BH72.</title>
        <authorList>
            <person name="Krause A."/>
            <person name="Ramakumar A."/>
            <person name="Bartels D."/>
            <person name="Battistoni F."/>
            <person name="Bekel T."/>
            <person name="Boch J."/>
            <person name="Boehm M."/>
            <person name="Friedrich F."/>
            <person name="Hurek T."/>
            <person name="Krause L."/>
            <person name="Linke B."/>
            <person name="McHardy A.C."/>
            <person name="Sarkar A."/>
            <person name="Schneiker S."/>
            <person name="Syed A.A."/>
            <person name="Thauer R."/>
            <person name="Vorhoelter F.-J."/>
            <person name="Weidner S."/>
            <person name="Puehler A."/>
            <person name="Reinhold-Hurek B."/>
            <person name="Kaiser O."/>
            <person name="Goesmann A."/>
        </authorList>
    </citation>
    <scope>NUCLEOTIDE SEQUENCE [LARGE SCALE GENOMIC DNA]</scope>
    <source>
        <strain>BH72</strain>
    </source>
</reference>
<feature type="chain" id="PRO_1000061708" description="PKHD-type hydroxylase azo0608">
    <location>
        <begin position="1"/>
        <end position="227"/>
    </location>
</feature>
<feature type="domain" description="Fe2OG dioxygenase" evidence="1">
    <location>
        <begin position="78"/>
        <end position="178"/>
    </location>
</feature>
<feature type="binding site" evidence="1">
    <location>
        <position position="97"/>
    </location>
    <ligand>
        <name>Fe cation</name>
        <dbReference type="ChEBI" id="CHEBI:24875"/>
    </ligand>
</feature>
<feature type="binding site" evidence="1">
    <location>
        <position position="99"/>
    </location>
    <ligand>
        <name>Fe cation</name>
        <dbReference type="ChEBI" id="CHEBI:24875"/>
    </ligand>
</feature>
<feature type="binding site" evidence="1">
    <location>
        <position position="159"/>
    </location>
    <ligand>
        <name>Fe cation</name>
        <dbReference type="ChEBI" id="CHEBI:24875"/>
    </ligand>
</feature>
<feature type="binding site" evidence="1">
    <location>
        <position position="169"/>
    </location>
    <ligand>
        <name>2-oxoglutarate</name>
        <dbReference type="ChEBI" id="CHEBI:16810"/>
    </ligand>
</feature>
<dbReference type="EC" id="1.14.11.-" evidence="1"/>
<dbReference type="EMBL" id="AM406670">
    <property type="protein sequence ID" value="CAL93225.1"/>
    <property type="molecule type" value="Genomic_DNA"/>
</dbReference>
<dbReference type="RefSeq" id="WP_011764343.1">
    <property type="nucleotide sequence ID" value="NC_008702.1"/>
</dbReference>
<dbReference type="SMR" id="A1K320"/>
<dbReference type="STRING" id="62928.azo0608"/>
<dbReference type="KEGG" id="azo:azo0608"/>
<dbReference type="eggNOG" id="COG3128">
    <property type="taxonomic scope" value="Bacteria"/>
</dbReference>
<dbReference type="HOGENOM" id="CLU_106663_0_0_4"/>
<dbReference type="Proteomes" id="UP000002588">
    <property type="component" value="Chromosome"/>
</dbReference>
<dbReference type="GO" id="GO:0016706">
    <property type="term" value="F:2-oxoglutarate-dependent dioxygenase activity"/>
    <property type="evidence" value="ECO:0007669"/>
    <property type="project" value="UniProtKB-UniRule"/>
</dbReference>
<dbReference type="GO" id="GO:0005506">
    <property type="term" value="F:iron ion binding"/>
    <property type="evidence" value="ECO:0007669"/>
    <property type="project" value="UniProtKB-UniRule"/>
</dbReference>
<dbReference type="GO" id="GO:0031418">
    <property type="term" value="F:L-ascorbic acid binding"/>
    <property type="evidence" value="ECO:0007669"/>
    <property type="project" value="UniProtKB-KW"/>
</dbReference>
<dbReference type="GO" id="GO:0006974">
    <property type="term" value="P:DNA damage response"/>
    <property type="evidence" value="ECO:0007669"/>
    <property type="project" value="TreeGrafter"/>
</dbReference>
<dbReference type="GO" id="GO:0006879">
    <property type="term" value="P:intracellular iron ion homeostasis"/>
    <property type="evidence" value="ECO:0007669"/>
    <property type="project" value="TreeGrafter"/>
</dbReference>
<dbReference type="Gene3D" id="2.60.120.620">
    <property type="entry name" value="q2cbj1_9rhob like domain"/>
    <property type="match status" value="1"/>
</dbReference>
<dbReference type="Gene3D" id="4.10.860.20">
    <property type="entry name" value="Rabenosyn, Rab binding domain"/>
    <property type="match status" value="1"/>
</dbReference>
<dbReference type="HAMAP" id="MF_00657">
    <property type="entry name" value="Hydroxyl_YbiX"/>
    <property type="match status" value="1"/>
</dbReference>
<dbReference type="InterPro" id="IPR005123">
    <property type="entry name" value="Oxoglu/Fe-dep_dioxygenase_dom"/>
</dbReference>
<dbReference type="InterPro" id="IPR041097">
    <property type="entry name" value="PKHD_C"/>
</dbReference>
<dbReference type="InterPro" id="IPR023550">
    <property type="entry name" value="PKHD_hydroxylase"/>
</dbReference>
<dbReference type="InterPro" id="IPR006620">
    <property type="entry name" value="Pro_4_hyd_alph"/>
</dbReference>
<dbReference type="InterPro" id="IPR044862">
    <property type="entry name" value="Pro_4_hyd_alph_FE2OG_OXY"/>
</dbReference>
<dbReference type="NCBIfam" id="NF003974">
    <property type="entry name" value="PRK05467.1-3"/>
    <property type="match status" value="1"/>
</dbReference>
<dbReference type="NCBIfam" id="NF003975">
    <property type="entry name" value="PRK05467.1-4"/>
    <property type="match status" value="1"/>
</dbReference>
<dbReference type="PANTHER" id="PTHR41536">
    <property type="entry name" value="PKHD-TYPE HYDROXYLASE YBIX"/>
    <property type="match status" value="1"/>
</dbReference>
<dbReference type="PANTHER" id="PTHR41536:SF1">
    <property type="entry name" value="PKHD-TYPE HYDROXYLASE YBIX"/>
    <property type="match status" value="1"/>
</dbReference>
<dbReference type="Pfam" id="PF13640">
    <property type="entry name" value="2OG-FeII_Oxy_3"/>
    <property type="match status" value="1"/>
</dbReference>
<dbReference type="Pfam" id="PF18331">
    <property type="entry name" value="PKHD_C"/>
    <property type="match status" value="1"/>
</dbReference>
<dbReference type="SMART" id="SM00702">
    <property type="entry name" value="P4Hc"/>
    <property type="match status" value="1"/>
</dbReference>
<dbReference type="SUPFAM" id="SSF51197">
    <property type="entry name" value="Clavaminate synthase-like"/>
    <property type="match status" value="1"/>
</dbReference>
<dbReference type="PROSITE" id="PS51471">
    <property type="entry name" value="FE2OG_OXY"/>
    <property type="match status" value="1"/>
</dbReference>
<keyword id="KW-0223">Dioxygenase</keyword>
<keyword id="KW-0408">Iron</keyword>
<keyword id="KW-0479">Metal-binding</keyword>
<keyword id="KW-0560">Oxidoreductase</keyword>
<keyword id="KW-1185">Reference proteome</keyword>
<keyword id="KW-0847">Vitamin C</keyword>
<comment type="cofactor">
    <cofactor evidence="1">
        <name>Fe(2+)</name>
        <dbReference type="ChEBI" id="CHEBI:29033"/>
    </cofactor>
    <text evidence="1">Binds 1 Fe(2+) ion per subunit.</text>
</comment>
<comment type="cofactor">
    <cofactor evidence="1">
        <name>L-ascorbate</name>
        <dbReference type="ChEBI" id="CHEBI:38290"/>
    </cofactor>
</comment>
<organism>
    <name type="scientific">Azoarcus sp. (strain BH72)</name>
    <dbReference type="NCBI Taxonomy" id="418699"/>
    <lineage>
        <taxon>Bacteria</taxon>
        <taxon>Pseudomonadati</taxon>
        <taxon>Pseudomonadota</taxon>
        <taxon>Betaproteobacteria</taxon>
        <taxon>Rhodocyclales</taxon>
        <taxon>Zoogloeaceae</taxon>
        <taxon>Azoarcus</taxon>
    </lineage>
</organism>